<feature type="chain" id="PRO_0000235001" description="Serine hydroxymethyltransferase">
    <location>
        <begin position="1"/>
        <end position="418"/>
    </location>
</feature>
<feature type="binding site" evidence="1">
    <location>
        <position position="121"/>
    </location>
    <ligand>
        <name>(6S)-5,6,7,8-tetrahydrofolate</name>
        <dbReference type="ChEBI" id="CHEBI:57453"/>
    </ligand>
</feature>
<feature type="binding site" evidence="1">
    <location>
        <begin position="125"/>
        <end position="127"/>
    </location>
    <ligand>
        <name>(6S)-5,6,7,8-tetrahydrofolate</name>
        <dbReference type="ChEBI" id="CHEBI:57453"/>
    </ligand>
</feature>
<feature type="binding site" evidence="1">
    <location>
        <begin position="356"/>
        <end position="358"/>
    </location>
    <ligand>
        <name>(6S)-5,6,7,8-tetrahydrofolate</name>
        <dbReference type="ChEBI" id="CHEBI:57453"/>
    </ligand>
</feature>
<feature type="site" description="Plays an important role in substrate specificity" evidence="1">
    <location>
        <position position="229"/>
    </location>
</feature>
<feature type="modified residue" description="N6-(pyridoxal phosphate)lysine" evidence="1">
    <location>
        <position position="230"/>
    </location>
</feature>
<reference key="1">
    <citation type="journal article" date="2005" name="Genome Res.">
        <title>Coping with cold: the genome of the versatile marine Antarctica bacterium Pseudoalteromonas haloplanktis TAC125.</title>
        <authorList>
            <person name="Medigue C."/>
            <person name="Krin E."/>
            <person name="Pascal G."/>
            <person name="Barbe V."/>
            <person name="Bernsel A."/>
            <person name="Bertin P.N."/>
            <person name="Cheung F."/>
            <person name="Cruveiller S."/>
            <person name="D'Amico S."/>
            <person name="Duilio A."/>
            <person name="Fang G."/>
            <person name="Feller G."/>
            <person name="Ho C."/>
            <person name="Mangenot S."/>
            <person name="Marino G."/>
            <person name="Nilsson J."/>
            <person name="Parrilli E."/>
            <person name="Rocha E.P.C."/>
            <person name="Rouy Z."/>
            <person name="Sekowska A."/>
            <person name="Tutino M.L."/>
            <person name="Vallenet D."/>
            <person name="von Heijne G."/>
            <person name="Danchin A."/>
        </authorList>
    </citation>
    <scope>NUCLEOTIDE SEQUENCE [LARGE SCALE GENOMIC DNA]</scope>
    <source>
        <strain>TAC 125</strain>
    </source>
</reference>
<proteinExistence type="inferred from homology"/>
<keyword id="KW-0028">Amino-acid biosynthesis</keyword>
<keyword id="KW-0963">Cytoplasm</keyword>
<keyword id="KW-0554">One-carbon metabolism</keyword>
<keyword id="KW-0663">Pyridoxal phosphate</keyword>
<keyword id="KW-1185">Reference proteome</keyword>
<keyword id="KW-0808">Transferase</keyword>
<name>GLYA_PSET1</name>
<accession>Q3II23</accession>
<protein>
    <recommendedName>
        <fullName evidence="1">Serine hydroxymethyltransferase</fullName>
        <shortName evidence="1">SHMT</shortName>
        <shortName evidence="1">Serine methylase</shortName>
        <ecNumber evidence="1">2.1.2.1</ecNumber>
    </recommendedName>
</protein>
<gene>
    <name evidence="1" type="primary">glyA</name>
    <name type="ordered locus">PSHAa2376</name>
</gene>
<dbReference type="EC" id="2.1.2.1" evidence="1"/>
<dbReference type="EMBL" id="CR954246">
    <property type="protein sequence ID" value="CAI87425.1"/>
    <property type="molecule type" value="Genomic_DNA"/>
</dbReference>
<dbReference type="SMR" id="Q3II23"/>
<dbReference type="STRING" id="326442.PSHAa2376"/>
<dbReference type="KEGG" id="pha:PSHAa2376"/>
<dbReference type="eggNOG" id="COG0112">
    <property type="taxonomic scope" value="Bacteria"/>
</dbReference>
<dbReference type="HOGENOM" id="CLU_022477_2_1_6"/>
<dbReference type="BioCyc" id="PHAL326442:PSHA_RS11705-MONOMER"/>
<dbReference type="UniPathway" id="UPA00193"/>
<dbReference type="UniPathway" id="UPA00288">
    <property type="reaction ID" value="UER01023"/>
</dbReference>
<dbReference type="Proteomes" id="UP000006843">
    <property type="component" value="Chromosome I"/>
</dbReference>
<dbReference type="GO" id="GO:0005829">
    <property type="term" value="C:cytosol"/>
    <property type="evidence" value="ECO:0007669"/>
    <property type="project" value="TreeGrafter"/>
</dbReference>
<dbReference type="GO" id="GO:0004372">
    <property type="term" value="F:glycine hydroxymethyltransferase activity"/>
    <property type="evidence" value="ECO:0007669"/>
    <property type="project" value="UniProtKB-UniRule"/>
</dbReference>
<dbReference type="GO" id="GO:0030170">
    <property type="term" value="F:pyridoxal phosphate binding"/>
    <property type="evidence" value="ECO:0007669"/>
    <property type="project" value="UniProtKB-UniRule"/>
</dbReference>
<dbReference type="GO" id="GO:0019264">
    <property type="term" value="P:glycine biosynthetic process from serine"/>
    <property type="evidence" value="ECO:0007669"/>
    <property type="project" value="UniProtKB-UniRule"/>
</dbReference>
<dbReference type="GO" id="GO:0035999">
    <property type="term" value="P:tetrahydrofolate interconversion"/>
    <property type="evidence" value="ECO:0007669"/>
    <property type="project" value="UniProtKB-UniRule"/>
</dbReference>
<dbReference type="CDD" id="cd00378">
    <property type="entry name" value="SHMT"/>
    <property type="match status" value="1"/>
</dbReference>
<dbReference type="FunFam" id="3.40.640.10:FF:000001">
    <property type="entry name" value="Serine hydroxymethyltransferase"/>
    <property type="match status" value="1"/>
</dbReference>
<dbReference type="FunFam" id="3.90.1150.10:FF:000003">
    <property type="entry name" value="Serine hydroxymethyltransferase"/>
    <property type="match status" value="1"/>
</dbReference>
<dbReference type="Gene3D" id="3.90.1150.10">
    <property type="entry name" value="Aspartate Aminotransferase, domain 1"/>
    <property type="match status" value="1"/>
</dbReference>
<dbReference type="Gene3D" id="3.40.640.10">
    <property type="entry name" value="Type I PLP-dependent aspartate aminotransferase-like (Major domain)"/>
    <property type="match status" value="1"/>
</dbReference>
<dbReference type="HAMAP" id="MF_00051">
    <property type="entry name" value="SHMT"/>
    <property type="match status" value="1"/>
</dbReference>
<dbReference type="InterPro" id="IPR015424">
    <property type="entry name" value="PyrdxlP-dep_Trfase"/>
</dbReference>
<dbReference type="InterPro" id="IPR015421">
    <property type="entry name" value="PyrdxlP-dep_Trfase_major"/>
</dbReference>
<dbReference type="InterPro" id="IPR015422">
    <property type="entry name" value="PyrdxlP-dep_Trfase_small"/>
</dbReference>
<dbReference type="InterPro" id="IPR001085">
    <property type="entry name" value="Ser_HO-MeTrfase"/>
</dbReference>
<dbReference type="InterPro" id="IPR049943">
    <property type="entry name" value="Ser_HO-MeTrfase-like"/>
</dbReference>
<dbReference type="InterPro" id="IPR019798">
    <property type="entry name" value="Ser_HO-MeTrfase_PLP_BS"/>
</dbReference>
<dbReference type="InterPro" id="IPR039429">
    <property type="entry name" value="SHMT-like_dom"/>
</dbReference>
<dbReference type="NCBIfam" id="NF000586">
    <property type="entry name" value="PRK00011.1"/>
    <property type="match status" value="1"/>
</dbReference>
<dbReference type="PANTHER" id="PTHR11680">
    <property type="entry name" value="SERINE HYDROXYMETHYLTRANSFERASE"/>
    <property type="match status" value="1"/>
</dbReference>
<dbReference type="PANTHER" id="PTHR11680:SF50">
    <property type="entry name" value="SERINE HYDROXYMETHYLTRANSFERASE"/>
    <property type="match status" value="1"/>
</dbReference>
<dbReference type="Pfam" id="PF00464">
    <property type="entry name" value="SHMT"/>
    <property type="match status" value="1"/>
</dbReference>
<dbReference type="PIRSF" id="PIRSF000412">
    <property type="entry name" value="SHMT"/>
    <property type="match status" value="1"/>
</dbReference>
<dbReference type="SUPFAM" id="SSF53383">
    <property type="entry name" value="PLP-dependent transferases"/>
    <property type="match status" value="1"/>
</dbReference>
<dbReference type="PROSITE" id="PS00096">
    <property type="entry name" value="SHMT"/>
    <property type="match status" value="1"/>
</dbReference>
<organism>
    <name type="scientific">Pseudoalteromonas translucida (strain TAC 125)</name>
    <dbReference type="NCBI Taxonomy" id="326442"/>
    <lineage>
        <taxon>Bacteria</taxon>
        <taxon>Pseudomonadati</taxon>
        <taxon>Pseudomonadota</taxon>
        <taxon>Gammaproteobacteria</taxon>
        <taxon>Alteromonadales</taxon>
        <taxon>Pseudoalteromonadaceae</taxon>
        <taxon>Pseudoalteromonas</taxon>
    </lineage>
</organism>
<comment type="function">
    <text evidence="1">Catalyzes the reversible interconversion of serine and glycine with tetrahydrofolate (THF) serving as the one-carbon carrier. This reaction serves as the major source of one-carbon groups required for the biosynthesis of purines, thymidylate, methionine, and other important biomolecules. Also exhibits THF-independent aldolase activity toward beta-hydroxyamino acids, producing glycine and aldehydes, via a retro-aldol mechanism.</text>
</comment>
<comment type="catalytic activity">
    <reaction evidence="1">
        <text>(6R)-5,10-methylene-5,6,7,8-tetrahydrofolate + glycine + H2O = (6S)-5,6,7,8-tetrahydrofolate + L-serine</text>
        <dbReference type="Rhea" id="RHEA:15481"/>
        <dbReference type="ChEBI" id="CHEBI:15377"/>
        <dbReference type="ChEBI" id="CHEBI:15636"/>
        <dbReference type="ChEBI" id="CHEBI:33384"/>
        <dbReference type="ChEBI" id="CHEBI:57305"/>
        <dbReference type="ChEBI" id="CHEBI:57453"/>
        <dbReference type="EC" id="2.1.2.1"/>
    </reaction>
</comment>
<comment type="cofactor">
    <cofactor evidence="1">
        <name>pyridoxal 5'-phosphate</name>
        <dbReference type="ChEBI" id="CHEBI:597326"/>
    </cofactor>
</comment>
<comment type="pathway">
    <text evidence="1">One-carbon metabolism; tetrahydrofolate interconversion.</text>
</comment>
<comment type="pathway">
    <text evidence="1">Amino-acid biosynthesis; glycine biosynthesis; glycine from L-serine: step 1/1.</text>
</comment>
<comment type="subunit">
    <text evidence="1">Homodimer.</text>
</comment>
<comment type="subcellular location">
    <subcellularLocation>
        <location evidence="1">Cytoplasm</location>
    </subcellularLocation>
</comment>
<comment type="similarity">
    <text evidence="1">Belongs to the SHMT family.</text>
</comment>
<sequence length="418" mass="45110">MLERSMNISDFDPELFDAIAKETARQEDHIELIASENYCSPRVLEAQGSQLTNKYAEGYPGKRYYGGCEHVDVVEQLAIDRANELFGSDYANVQPHAGSQANAAVFLALLNAGDTVLGMSLAHGGHLTHGSHVNFSGKLYNAIQYGLDETTGEIDYAQVEALALEHKPKMIIGGFSAYSGIVDWAKLREIADKIGAYFFVDMAHVAGLIAAGIYPSPVPHAHVVTTTTHKTLAGPRGGLIISACGDEAIYKKLNSAVFPGGQGGPLCHVIAAKAVAFKEALQPEFKVYQTQVVKNAQAMVAVMQERGYKIVSDKTENHLFLLDLINKDITGKDADAALGNAHITVNKNSVPNDPRSPFVTSGLRIGSPAITRRGFKEAESKELAGWICDVLDNINDESVQAQVREKVKAICAKLPVYA</sequence>
<evidence type="ECO:0000255" key="1">
    <source>
        <dbReference type="HAMAP-Rule" id="MF_00051"/>
    </source>
</evidence>